<comment type="function">
    <text evidence="1">Catalyzes the reversible reaction in which hydroxymethyl group from 5,10-methylenetetrahydrofolate is transferred onto alpha-ketoisovalerate to form ketopantoate.</text>
</comment>
<comment type="catalytic activity">
    <reaction evidence="1">
        <text>3-methyl-2-oxobutanoate + (6R)-5,10-methylene-5,6,7,8-tetrahydrofolate + H2O = 2-dehydropantoate + (6S)-5,6,7,8-tetrahydrofolate</text>
        <dbReference type="Rhea" id="RHEA:11824"/>
        <dbReference type="ChEBI" id="CHEBI:11561"/>
        <dbReference type="ChEBI" id="CHEBI:11851"/>
        <dbReference type="ChEBI" id="CHEBI:15377"/>
        <dbReference type="ChEBI" id="CHEBI:15636"/>
        <dbReference type="ChEBI" id="CHEBI:57453"/>
        <dbReference type="EC" id="2.1.2.11"/>
    </reaction>
</comment>
<comment type="cofactor">
    <cofactor evidence="1">
        <name>Mg(2+)</name>
        <dbReference type="ChEBI" id="CHEBI:18420"/>
    </cofactor>
    <text evidence="1">Binds 1 Mg(2+) ion per subunit.</text>
</comment>
<comment type="pathway">
    <text evidence="1">Cofactor biosynthesis; (R)-pantothenate biosynthesis; (R)-pantoate from 3-methyl-2-oxobutanoate: step 1/2.</text>
</comment>
<comment type="subunit">
    <text evidence="1">Homodecamer; pentamer of dimers.</text>
</comment>
<comment type="subcellular location">
    <subcellularLocation>
        <location evidence="1">Cytoplasm</location>
    </subcellularLocation>
</comment>
<comment type="similarity">
    <text evidence="1">Belongs to the PanB family.</text>
</comment>
<dbReference type="EC" id="2.1.2.11" evidence="1"/>
<dbReference type="EMBL" id="AE017285">
    <property type="protein sequence ID" value="AAS96918.1"/>
    <property type="molecule type" value="Genomic_DNA"/>
</dbReference>
<dbReference type="RefSeq" id="WP_010939717.1">
    <property type="nucleotide sequence ID" value="NC_002937.3"/>
</dbReference>
<dbReference type="RefSeq" id="YP_011658.1">
    <property type="nucleotide sequence ID" value="NC_002937.3"/>
</dbReference>
<dbReference type="SMR" id="Q729A6"/>
<dbReference type="STRING" id="882.DVU_2446"/>
<dbReference type="PaxDb" id="882-DVU_2446"/>
<dbReference type="EnsemblBacteria" id="AAS96918">
    <property type="protein sequence ID" value="AAS96918"/>
    <property type="gene ID" value="DVU_2446"/>
</dbReference>
<dbReference type="KEGG" id="dvu:DVU_2446"/>
<dbReference type="PATRIC" id="fig|882.5.peg.2214"/>
<dbReference type="eggNOG" id="COG0413">
    <property type="taxonomic scope" value="Bacteria"/>
</dbReference>
<dbReference type="HOGENOM" id="CLU_036645_1_0_7"/>
<dbReference type="OrthoDB" id="9781789at2"/>
<dbReference type="PhylomeDB" id="Q729A6"/>
<dbReference type="UniPathway" id="UPA00028">
    <property type="reaction ID" value="UER00003"/>
</dbReference>
<dbReference type="Proteomes" id="UP000002194">
    <property type="component" value="Chromosome"/>
</dbReference>
<dbReference type="GO" id="GO:0005737">
    <property type="term" value="C:cytoplasm"/>
    <property type="evidence" value="ECO:0007669"/>
    <property type="project" value="UniProtKB-SubCell"/>
</dbReference>
<dbReference type="GO" id="GO:0003864">
    <property type="term" value="F:3-methyl-2-oxobutanoate hydroxymethyltransferase activity"/>
    <property type="evidence" value="ECO:0007669"/>
    <property type="project" value="UniProtKB-UniRule"/>
</dbReference>
<dbReference type="GO" id="GO:0000287">
    <property type="term" value="F:magnesium ion binding"/>
    <property type="evidence" value="ECO:0007669"/>
    <property type="project" value="TreeGrafter"/>
</dbReference>
<dbReference type="GO" id="GO:0015940">
    <property type="term" value="P:pantothenate biosynthetic process"/>
    <property type="evidence" value="ECO:0007669"/>
    <property type="project" value="UniProtKB-UniRule"/>
</dbReference>
<dbReference type="CDD" id="cd06557">
    <property type="entry name" value="KPHMT-like"/>
    <property type="match status" value="1"/>
</dbReference>
<dbReference type="FunFam" id="3.20.20.60:FF:000003">
    <property type="entry name" value="3-methyl-2-oxobutanoate hydroxymethyltransferase"/>
    <property type="match status" value="1"/>
</dbReference>
<dbReference type="Gene3D" id="3.20.20.60">
    <property type="entry name" value="Phosphoenolpyruvate-binding domains"/>
    <property type="match status" value="1"/>
</dbReference>
<dbReference type="HAMAP" id="MF_00156">
    <property type="entry name" value="PanB"/>
    <property type="match status" value="1"/>
</dbReference>
<dbReference type="InterPro" id="IPR003700">
    <property type="entry name" value="Pantoate_hydroxy_MeTrfase"/>
</dbReference>
<dbReference type="InterPro" id="IPR015813">
    <property type="entry name" value="Pyrv/PenolPyrv_kinase-like_dom"/>
</dbReference>
<dbReference type="InterPro" id="IPR040442">
    <property type="entry name" value="Pyrv_kinase-like_dom_sf"/>
</dbReference>
<dbReference type="NCBIfam" id="TIGR00222">
    <property type="entry name" value="panB"/>
    <property type="match status" value="1"/>
</dbReference>
<dbReference type="NCBIfam" id="NF001452">
    <property type="entry name" value="PRK00311.1"/>
    <property type="match status" value="1"/>
</dbReference>
<dbReference type="PANTHER" id="PTHR20881">
    <property type="entry name" value="3-METHYL-2-OXOBUTANOATE HYDROXYMETHYLTRANSFERASE"/>
    <property type="match status" value="1"/>
</dbReference>
<dbReference type="PANTHER" id="PTHR20881:SF0">
    <property type="entry name" value="3-METHYL-2-OXOBUTANOATE HYDROXYMETHYLTRANSFERASE"/>
    <property type="match status" value="1"/>
</dbReference>
<dbReference type="Pfam" id="PF02548">
    <property type="entry name" value="Pantoate_transf"/>
    <property type="match status" value="1"/>
</dbReference>
<dbReference type="PIRSF" id="PIRSF000388">
    <property type="entry name" value="Pantoate_hydroxy_MeTrfase"/>
    <property type="match status" value="1"/>
</dbReference>
<dbReference type="SUPFAM" id="SSF51621">
    <property type="entry name" value="Phosphoenolpyruvate/pyruvate domain"/>
    <property type="match status" value="1"/>
</dbReference>
<proteinExistence type="inferred from homology"/>
<sequence>MSTHTPPSSATPTSGQGVRPLTTADIRKAKGRQRLAMLTAYDYTSARIVDGAGADLILVGDSLGMVMLGREDTLSVTLDEMLHHCRAVVRGTRHAMVVADMPFMTYETGVRDALLNGARLFRESGVRAVKLEGAGPVLPQVRALVDAGIPVMGHLGLTPQRVAEMGGFKVQGRQAEAALRLFDDALALQEAGCFSLVLECVPAPVAEQVTARLHIPTIGIGAGAGCDGQVLVLHDMLGLYGELSPRFVKRYADLAGMAGEAVARYAHEVREGSFPAAEHTFGIDDGQFEAFMAALDKRGCRQTPTGE</sequence>
<gene>
    <name evidence="1" type="primary">panB</name>
    <name type="ordered locus">DVU_2446</name>
</gene>
<evidence type="ECO:0000255" key="1">
    <source>
        <dbReference type="HAMAP-Rule" id="MF_00156"/>
    </source>
</evidence>
<name>PANB_NITV2</name>
<feature type="chain" id="PRO_0000297261" description="3-methyl-2-oxobutanoate hydroxymethyltransferase">
    <location>
        <begin position="1"/>
        <end position="307"/>
    </location>
</feature>
<feature type="active site" description="Proton acceptor" evidence="1">
    <location>
        <position position="199"/>
    </location>
</feature>
<feature type="binding site" evidence="1">
    <location>
        <begin position="61"/>
        <end position="62"/>
    </location>
    <ligand>
        <name>3-methyl-2-oxobutanoate</name>
        <dbReference type="ChEBI" id="CHEBI:11851"/>
    </ligand>
</feature>
<feature type="binding site" evidence="1">
    <location>
        <position position="61"/>
    </location>
    <ligand>
        <name>Mg(2+)</name>
        <dbReference type="ChEBI" id="CHEBI:18420"/>
    </ligand>
</feature>
<feature type="binding site" evidence="1">
    <location>
        <position position="100"/>
    </location>
    <ligand>
        <name>3-methyl-2-oxobutanoate</name>
        <dbReference type="ChEBI" id="CHEBI:11851"/>
    </ligand>
</feature>
<feature type="binding site" evidence="1">
    <location>
        <position position="100"/>
    </location>
    <ligand>
        <name>Mg(2+)</name>
        <dbReference type="ChEBI" id="CHEBI:18420"/>
    </ligand>
</feature>
<feature type="binding site" evidence="1">
    <location>
        <position position="130"/>
    </location>
    <ligand>
        <name>3-methyl-2-oxobutanoate</name>
        <dbReference type="ChEBI" id="CHEBI:11851"/>
    </ligand>
</feature>
<feature type="binding site" evidence="1">
    <location>
        <position position="132"/>
    </location>
    <ligand>
        <name>Mg(2+)</name>
        <dbReference type="ChEBI" id="CHEBI:18420"/>
    </ligand>
</feature>
<keyword id="KW-0963">Cytoplasm</keyword>
<keyword id="KW-0460">Magnesium</keyword>
<keyword id="KW-0479">Metal-binding</keyword>
<keyword id="KW-0566">Pantothenate biosynthesis</keyword>
<keyword id="KW-1185">Reference proteome</keyword>
<keyword id="KW-0808">Transferase</keyword>
<accession>Q729A6</accession>
<reference key="1">
    <citation type="journal article" date="2004" name="Nat. Biotechnol.">
        <title>The genome sequence of the anaerobic, sulfate-reducing bacterium Desulfovibrio vulgaris Hildenborough.</title>
        <authorList>
            <person name="Heidelberg J.F."/>
            <person name="Seshadri R."/>
            <person name="Haveman S.A."/>
            <person name="Hemme C.L."/>
            <person name="Paulsen I.T."/>
            <person name="Kolonay J.F."/>
            <person name="Eisen J.A."/>
            <person name="Ward N.L."/>
            <person name="Methe B.A."/>
            <person name="Brinkac L.M."/>
            <person name="Daugherty S.C."/>
            <person name="DeBoy R.T."/>
            <person name="Dodson R.J."/>
            <person name="Durkin A.S."/>
            <person name="Madupu R."/>
            <person name="Nelson W.C."/>
            <person name="Sullivan S.A."/>
            <person name="Fouts D.E."/>
            <person name="Haft D.H."/>
            <person name="Selengut J."/>
            <person name="Peterson J.D."/>
            <person name="Davidsen T.M."/>
            <person name="Zafar N."/>
            <person name="Zhou L."/>
            <person name="Radune D."/>
            <person name="Dimitrov G."/>
            <person name="Hance M."/>
            <person name="Tran K."/>
            <person name="Khouri H.M."/>
            <person name="Gill J."/>
            <person name="Utterback T.R."/>
            <person name="Feldblyum T.V."/>
            <person name="Wall J.D."/>
            <person name="Voordouw G."/>
            <person name="Fraser C.M."/>
        </authorList>
    </citation>
    <scope>NUCLEOTIDE SEQUENCE [LARGE SCALE GENOMIC DNA]</scope>
    <source>
        <strain>ATCC 29579 / DSM 644 / CCUG 34227 / NCIMB 8303 / VKM B-1760 / Hildenborough</strain>
    </source>
</reference>
<organism>
    <name type="scientific">Nitratidesulfovibrio vulgaris (strain ATCC 29579 / DSM 644 / CCUG 34227 / NCIMB 8303 / VKM B-1760 / Hildenborough)</name>
    <name type="common">Desulfovibrio vulgaris</name>
    <dbReference type="NCBI Taxonomy" id="882"/>
    <lineage>
        <taxon>Bacteria</taxon>
        <taxon>Pseudomonadati</taxon>
        <taxon>Thermodesulfobacteriota</taxon>
        <taxon>Desulfovibrionia</taxon>
        <taxon>Desulfovibrionales</taxon>
        <taxon>Desulfovibrionaceae</taxon>
        <taxon>Nitratidesulfovibrio</taxon>
    </lineage>
</organism>
<protein>
    <recommendedName>
        <fullName evidence="1">3-methyl-2-oxobutanoate hydroxymethyltransferase</fullName>
        <ecNumber evidence="1">2.1.2.11</ecNumber>
    </recommendedName>
    <alternativeName>
        <fullName evidence="1">Ketopantoate hydroxymethyltransferase</fullName>
        <shortName evidence="1">KPHMT</shortName>
    </alternativeName>
</protein>